<reference key="1">
    <citation type="journal article" date="2007" name="PLoS Genet.">
        <title>The complete genome sequence of Yersinia pseudotuberculosis IP31758, the causative agent of Far East scarlet-like fever.</title>
        <authorList>
            <person name="Eppinger M."/>
            <person name="Rosovitz M.J."/>
            <person name="Fricke W.F."/>
            <person name="Rasko D.A."/>
            <person name="Kokorina G."/>
            <person name="Fayolle C."/>
            <person name="Lindler L.E."/>
            <person name="Carniel E."/>
            <person name="Ravel J."/>
        </authorList>
    </citation>
    <scope>NUCLEOTIDE SEQUENCE [LARGE SCALE GENOMIC DNA]</scope>
    <source>
        <strain>IP 31758</strain>
    </source>
</reference>
<accession>A7FD46</accession>
<comment type="function">
    <text evidence="1">Catalyzes the conversion of pppGpp to ppGpp. Guanosine pentaphosphate (pppGpp) is a cytoplasmic signaling molecule which together with ppGpp controls the 'stringent response', an adaptive process that allows bacteria to respond to amino acid starvation, resulting in the coordinated regulation of numerous cellular activities.</text>
</comment>
<comment type="catalytic activity">
    <reaction evidence="1">
        <text>guanosine 3'-diphosphate 5'-triphosphate + H2O = guanosine 3',5'-bis(diphosphate) + phosphate + H(+)</text>
        <dbReference type="Rhea" id="RHEA:13073"/>
        <dbReference type="ChEBI" id="CHEBI:15377"/>
        <dbReference type="ChEBI" id="CHEBI:15378"/>
        <dbReference type="ChEBI" id="CHEBI:43474"/>
        <dbReference type="ChEBI" id="CHEBI:77828"/>
        <dbReference type="ChEBI" id="CHEBI:142410"/>
        <dbReference type="EC" id="3.6.1.40"/>
    </reaction>
</comment>
<comment type="pathway">
    <text evidence="1">Purine metabolism; ppGpp biosynthesis; ppGpp from GTP: step 2/2.</text>
</comment>
<comment type="similarity">
    <text evidence="1">Belongs to the GppA/Ppx family. GppA subfamily.</text>
</comment>
<organism>
    <name type="scientific">Yersinia pseudotuberculosis serotype O:1b (strain IP 31758)</name>
    <dbReference type="NCBI Taxonomy" id="349747"/>
    <lineage>
        <taxon>Bacteria</taxon>
        <taxon>Pseudomonadati</taxon>
        <taxon>Pseudomonadota</taxon>
        <taxon>Gammaproteobacteria</taxon>
        <taxon>Enterobacterales</taxon>
        <taxon>Yersiniaceae</taxon>
        <taxon>Yersinia</taxon>
    </lineage>
</organism>
<protein>
    <recommendedName>
        <fullName evidence="1">Guanosine-5'-triphosphate,3'-diphosphate pyrophosphatase</fullName>
        <ecNumber evidence="1">3.6.1.40</ecNumber>
    </recommendedName>
    <alternativeName>
        <fullName evidence="1">Guanosine pentaphosphate phosphohydrolase</fullName>
    </alternativeName>
    <alternativeName>
        <fullName evidence="1">pppGpp-5'-phosphohydrolase</fullName>
    </alternativeName>
</protein>
<name>GPPA_YERP3</name>
<evidence type="ECO:0000255" key="1">
    <source>
        <dbReference type="HAMAP-Rule" id="MF_01550"/>
    </source>
</evidence>
<feature type="chain" id="PRO_1000068825" description="Guanosine-5'-triphosphate,3'-diphosphate pyrophosphatase">
    <location>
        <begin position="1"/>
        <end position="498"/>
    </location>
</feature>
<gene>
    <name evidence="1" type="primary">gppA</name>
    <name type="ordered locus">YpsIP31758_0177</name>
</gene>
<keyword id="KW-0378">Hydrolase</keyword>
<dbReference type="EC" id="3.6.1.40" evidence="1"/>
<dbReference type="EMBL" id="CP000720">
    <property type="protein sequence ID" value="ABS48526.1"/>
    <property type="molecule type" value="Genomic_DNA"/>
</dbReference>
<dbReference type="SMR" id="A7FD46"/>
<dbReference type="KEGG" id="ypi:YpsIP31758_0177"/>
<dbReference type="HOGENOM" id="CLU_025908_4_0_6"/>
<dbReference type="UniPathway" id="UPA00908">
    <property type="reaction ID" value="UER00885"/>
</dbReference>
<dbReference type="Proteomes" id="UP000002412">
    <property type="component" value="Chromosome"/>
</dbReference>
<dbReference type="GO" id="GO:0004309">
    <property type="term" value="F:exopolyphosphatase activity"/>
    <property type="evidence" value="ECO:0007669"/>
    <property type="project" value="InterPro"/>
</dbReference>
<dbReference type="GO" id="GO:0008894">
    <property type="term" value="F:guanosine-5'-triphosphate,3'-diphosphate diphosphatase activity"/>
    <property type="evidence" value="ECO:0007669"/>
    <property type="project" value="UniProtKB-UniRule"/>
</dbReference>
<dbReference type="GO" id="GO:0015974">
    <property type="term" value="P:guanosine pentaphosphate catabolic process"/>
    <property type="evidence" value="ECO:0007669"/>
    <property type="project" value="InterPro"/>
</dbReference>
<dbReference type="GO" id="GO:0015970">
    <property type="term" value="P:guanosine tetraphosphate biosynthetic process"/>
    <property type="evidence" value="ECO:0007669"/>
    <property type="project" value="UniProtKB-UniRule"/>
</dbReference>
<dbReference type="GO" id="GO:0015949">
    <property type="term" value="P:nucleobase-containing small molecule interconversion"/>
    <property type="evidence" value="ECO:0007669"/>
    <property type="project" value="TreeGrafter"/>
</dbReference>
<dbReference type="CDD" id="cd24117">
    <property type="entry name" value="ASKHA_NBD_EcGppA-like"/>
    <property type="match status" value="1"/>
</dbReference>
<dbReference type="FunFam" id="1.10.3210.10:FF:000004">
    <property type="entry name" value="Guanosine-5'-triphosphate,3'-diphosphate pyrophosphatase"/>
    <property type="match status" value="1"/>
</dbReference>
<dbReference type="FunFam" id="3.30.420.150:FF:000001">
    <property type="entry name" value="Guanosine-5'-triphosphate,3'-diphosphate pyrophosphatase"/>
    <property type="match status" value="1"/>
</dbReference>
<dbReference type="FunFam" id="3.30.420.40:FF:000023">
    <property type="entry name" value="Guanosine-5'-triphosphate,3'-diphosphate pyrophosphatase"/>
    <property type="match status" value="1"/>
</dbReference>
<dbReference type="Gene3D" id="3.30.420.40">
    <property type="match status" value="1"/>
</dbReference>
<dbReference type="Gene3D" id="3.30.420.150">
    <property type="entry name" value="Exopolyphosphatase. Domain 2"/>
    <property type="match status" value="1"/>
</dbReference>
<dbReference type="Gene3D" id="1.10.3210.10">
    <property type="entry name" value="Hypothetical protein af1432"/>
    <property type="match status" value="1"/>
</dbReference>
<dbReference type="HAMAP" id="MF_01550">
    <property type="entry name" value="GppA"/>
    <property type="match status" value="1"/>
</dbReference>
<dbReference type="InterPro" id="IPR043129">
    <property type="entry name" value="ATPase_NBD"/>
</dbReference>
<dbReference type="InterPro" id="IPR022371">
    <property type="entry name" value="Exopolyphosphatase"/>
</dbReference>
<dbReference type="InterPro" id="IPR050273">
    <property type="entry name" value="GppA/Ppx_hydrolase"/>
</dbReference>
<dbReference type="InterPro" id="IPR023709">
    <property type="entry name" value="Guo-5TP_3DP_PyrP"/>
</dbReference>
<dbReference type="InterPro" id="IPR048950">
    <property type="entry name" value="Ppx_GppA_C"/>
</dbReference>
<dbReference type="InterPro" id="IPR003695">
    <property type="entry name" value="Ppx_GppA_N"/>
</dbReference>
<dbReference type="InterPro" id="IPR030673">
    <property type="entry name" value="PyroPPase_GppA_Ppx"/>
</dbReference>
<dbReference type="NCBIfam" id="TIGR03706">
    <property type="entry name" value="exo_poly_only"/>
    <property type="match status" value="1"/>
</dbReference>
<dbReference type="NCBIfam" id="NF008260">
    <property type="entry name" value="PRK11031.1"/>
    <property type="match status" value="1"/>
</dbReference>
<dbReference type="PANTHER" id="PTHR30005">
    <property type="entry name" value="EXOPOLYPHOSPHATASE"/>
    <property type="match status" value="1"/>
</dbReference>
<dbReference type="PANTHER" id="PTHR30005:SF0">
    <property type="entry name" value="RETROGRADE REGULATION PROTEIN 2"/>
    <property type="match status" value="1"/>
</dbReference>
<dbReference type="Pfam" id="PF02541">
    <property type="entry name" value="Ppx-GppA"/>
    <property type="match status" value="1"/>
</dbReference>
<dbReference type="Pfam" id="PF21447">
    <property type="entry name" value="Ppx-GppA_III"/>
    <property type="match status" value="1"/>
</dbReference>
<dbReference type="PIRSF" id="PIRSF001267">
    <property type="entry name" value="Pyrophosphatase_GppA_Ppx"/>
    <property type="match status" value="1"/>
</dbReference>
<dbReference type="SUPFAM" id="SSF53067">
    <property type="entry name" value="Actin-like ATPase domain"/>
    <property type="match status" value="2"/>
</dbReference>
<dbReference type="SUPFAM" id="SSF109604">
    <property type="entry name" value="HD-domain/PDEase-like"/>
    <property type="match status" value="1"/>
</dbReference>
<proteinExistence type="inferred from homology"/>
<sequence length="498" mass="55926">MMLSSTSLYAAIDLGSNSFHMLVVREVAGSIQTLARIKRKVRLAAGLDNQNHLSQEAMERGWQCLKLFSERLQDIPLDQIRVVATATLRLASNADEFLRTATEILGCPIQVISGEEEARLIYHGVAHTTGGPEQRLVVDIGGGSTELVTGNGAQANILVSLSMGCVTWLERYFGDRHLAKENFERAELAAHEMIKPVAQRFREHGWQVCVGASGTVQALQEIMVAQGMDELITLAKLQQLKQRAIQCGKLEELEIPGLTLERALVFPSGLSILIAIFQELSIESMTLAGGALREGLVYGMLHLPVEQDIRRRTLRNLQRRYLLDTEQAKRVSCLADNFFLQVEKEWHLDGRCREFLQNACLIHEIGLSVDFKHAPQHAAYLIRNLDLPGFTPAQKLLLSALLQNQSDTIDLSLLNQQNALPADMAQHLCRLLRLAIIFSSRRRDDTLPAVRLRADNNALYVLVPQGWLEQHPYRAEALEQESHWQSYVQWPLLLEELS</sequence>